<protein>
    <recommendedName>
        <fullName evidence="2">Formamidopyrimidine-DNA glycosylase</fullName>
        <shortName evidence="2">Fapy-DNA glycosylase</shortName>
        <ecNumber evidence="2">3.2.2.23</ecNumber>
    </recommendedName>
    <alternativeName>
        <fullName evidence="2">DNA-(apurinic or apyrimidinic site) lyase MutM</fullName>
        <shortName evidence="2">AP lyase MutM</shortName>
        <ecNumber evidence="2">4.2.99.18</ecNumber>
    </alternativeName>
</protein>
<accession>A1UZN2</accession>
<organism>
    <name type="scientific">Burkholderia mallei (strain SAVP1)</name>
    <dbReference type="NCBI Taxonomy" id="320388"/>
    <lineage>
        <taxon>Bacteria</taxon>
        <taxon>Pseudomonadati</taxon>
        <taxon>Pseudomonadota</taxon>
        <taxon>Betaproteobacteria</taxon>
        <taxon>Burkholderiales</taxon>
        <taxon>Burkholderiaceae</taxon>
        <taxon>Burkholderia</taxon>
        <taxon>pseudomallei group</taxon>
    </lineage>
</organism>
<dbReference type="EC" id="3.2.2.23" evidence="2"/>
<dbReference type="EC" id="4.2.99.18" evidence="2"/>
<dbReference type="EMBL" id="CP000526">
    <property type="protein sequence ID" value="ABM50474.1"/>
    <property type="molecule type" value="Genomic_DNA"/>
</dbReference>
<dbReference type="RefSeq" id="WP_004195234.1">
    <property type="nucleotide sequence ID" value="NC_008785.1"/>
</dbReference>
<dbReference type="SMR" id="A1UZN2"/>
<dbReference type="GeneID" id="92980781"/>
<dbReference type="KEGG" id="bmv:BMASAVP1_A0083"/>
<dbReference type="HOGENOM" id="CLU_038423_1_1_4"/>
<dbReference type="GO" id="GO:0034039">
    <property type="term" value="F:8-oxo-7,8-dihydroguanine DNA N-glycosylase activity"/>
    <property type="evidence" value="ECO:0007669"/>
    <property type="project" value="TreeGrafter"/>
</dbReference>
<dbReference type="GO" id="GO:0140078">
    <property type="term" value="F:class I DNA-(apurinic or apyrimidinic site) endonuclease activity"/>
    <property type="evidence" value="ECO:0007669"/>
    <property type="project" value="UniProtKB-EC"/>
</dbReference>
<dbReference type="GO" id="GO:0003684">
    <property type="term" value="F:damaged DNA binding"/>
    <property type="evidence" value="ECO:0007669"/>
    <property type="project" value="InterPro"/>
</dbReference>
<dbReference type="GO" id="GO:0008270">
    <property type="term" value="F:zinc ion binding"/>
    <property type="evidence" value="ECO:0007669"/>
    <property type="project" value="UniProtKB-UniRule"/>
</dbReference>
<dbReference type="GO" id="GO:0006284">
    <property type="term" value="P:base-excision repair"/>
    <property type="evidence" value="ECO:0007669"/>
    <property type="project" value="InterPro"/>
</dbReference>
<dbReference type="CDD" id="cd08966">
    <property type="entry name" value="EcFpg-like_N"/>
    <property type="match status" value="1"/>
</dbReference>
<dbReference type="FunFam" id="1.10.8.50:FF:000003">
    <property type="entry name" value="Formamidopyrimidine-DNA glycosylase"/>
    <property type="match status" value="1"/>
</dbReference>
<dbReference type="FunFam" id="3.20.190.10:FF:000001">
    <property type="entry name" value="Formamidopyrimidine-DNA glycosylase"/>
    <property type="match status" value="1"/>
</dbReference>
<dbReference type="Gene3D" id="1.10.8.50">
    <property type="match status" value="1"/>
</dbReference>
<dbReference type="Gene3D" id="3.20.190.10">
    <property type="entry name" value="MutM-like, N-terminal"/>
    <property type="match status" value="1"/>
</dbReference>
<dbReference type="HAMAP" id="MF_00103">
    <property type="entry name" value="Fapy_DNA_glycosyl"/>
    <property type="match status" value="1"/>
</dbReference>
<dbReference type="InterPro" id="IPR015886">
    <property type="entry name" value="DNA_glyclase/AP_lyase_DNA-bd"/>
</dbReference>
<dbReference type="InterPro" id="IPR015887">
    <property type="entry name" value="DNA_glyclase_Znf_dom_DNA_BS"/>
</dbReference>
<dbReference type="InterPro" id="IPR020629">
    <property type="entry name" value="Formamido-pyr_DNA_Glyclase"/>
</dbReference>
<dbReference type="InterPro" id="IPR012319">
    <property type="entry name" value="FPG_cat"/>
</dbReference>
<dbReference type="InterPro" id="IPR035937">
    <property type="entry name" value="MutM-like_N-ter"/>
</dbReference>
<dbReference type="InterPro" id="IPR010979">
    <property type="entry name" value="Ribosomal_uS13-like_H2TH"/>
</dbReference>
<dbReference type="InterPro" id="IPR000214">
    <property type="entry name" value="Znf_DNA_glyclase/AP_lyase"/>
</dbReference>
<dbReference type="InterPro" id="IPR010663">
    <property type="entry name" value="Znf_FPG/IleRS"/>
</dbReference>
<dbReference type="NCBIfam" id="TIGR00577">
    <property type="entry name" value="fpg"/>
    <property type="match status" value="1"/>
</dbReference>
<dbReference type="NCBIfam" id="NF002211">
    <property type="entry name" value="PRK01103.1"/>
    <property type="match status" value="1"/>
</dbReference>
<dbReference type="PANTHER" id="PTHR22993">
    <property type="entry name" value="FORMAMIDOPYRIMIDINE-DNA GLYCOSYLASE"/>
    <property type="match status" value="1"/>
</dbReference>
<dbReference type="PANTHER" id="PTHR22993:SF9">
    <property type="entry name" value="FORMAMIDOPYRIMIDINE-DNA GLYCOSYLASE"/>
    <property type="match status" value="1"/>
</dbReference>
<dbReference type="Pfam" id="PF01149">
    <property type="entry name" value="Fapy_DNA_glyco"/>
    <property type="match status" value="1"/>
</dbReference>
<dbReference type="Pfam" id="PF06831">
    <property type="entry name" value="H2TH"/>
    <property type="match status" value="1"/>
</dbReference>
<dbReference type="Pfam" id="PF06827">
    <property type="entry name" value="zf-FPG_IleRS"/>
    <property type="match status" value="1"/>
</dbReference>
<dbReference type="SMART" id="SM00898">
    <property type="entry name" value="Fapy_DNA_glyco"/>
    <property type="match status" value="1"/>
</dbReference>
<dbReference type="SMART" id="SM01232">
    <property type="entry name" value="H2TH"/>
    <property type="match status" value="1"/>
</dbReference>
<dbReference type="SUPFAM" id="SSF57716">
    <property type="entry name" value="Glucocorticoid receptor-like (DNA-binding domain)"/>
    <property type="match status" value="1"/>
</dbReference>
<dbReference type="SUPFAM" id="SSF81624">
    <property type="entry name" value="N-terminal domain of MutM-like DNA repair proteins"/>
    <property type="match status" value="1"/>
</dbReference>
<dbReference type="SUPFAM" id="SSF46946">
    <property type="entry name" value="S13-like H2TH domain"/>
    <property type="match status" value="1"/>
</dbReference>
<dbReference type="PROSITE" id="PS51068">
    <property type="entry name" value="FPG_CAT"/>
    <property type="match status" value="1"/>
</dbReference>
<dbReference type="PROSITE" id="PS01242">
    <property type="entry name" value="ZF_FPG_1"/>
    <property type="match status" value="1"/>
</dbReference>
<dbReference type="PROSITE" id="PS51066">
    <property type="entry name" value="ZF_FPG_2"/>
    <property type="match status" value="1"/>
</dbReference>
<name>FPG_BURMS</name>
<proteinExistence type="inferred from homology"/>
<evidence type="ECO:0000250" key="1"/>
<evidence type="ECO:0000255" key="2">
    <source>
        <dbReference type="HAMAP-Rule" id="MF_00103"/>
    </source>
</evidence>
<feature type="initiator methionine" description="Removed" evidence="1">
    <location>
        <position position="1"/>
    </location>
</feature>
<feature type="chain" id="PRO_1000008684" description="Formamidopyrimidine-DNA glycosylase">
    <location>
        <begin position="2"/>
        <end position="272"/>
    </location>
</feature>
<feature type="zinc finger region" description="FPG-type" evidence="2">
    <location>
        <begin position="238"/>
        <end position="272"/>
    </location>
</feature>
<feature type="active site" description="Schiff-base intermediate with DNA" evidence="2">
    <location>
        <position position="2"/>
    </location>
</feature>
<feature type="active site" description="Proton donor" evidence="2">
    <location>
        <position position="3"/>
    </location>
</feature>
<feature type="active site" description="Proton donor; for beta-elimination activity" evidence="2">
    <location>
        <position position="58"/>
    </location>
</feature>
<feature type="active site" description="Proton donor; for delta-elimination activity" evidence="2">
    <location>
        <position position="262"/>
    </location>
</feature>
<feature type="binding site" evidence="2">
    <location>
        <position position="94"/>
    </location>
    <ligand>
        <name>DNA</name>
        <dbReference type="ChEBI" id="CHEBI:16991"/>
    </ligand>
</feature>
<feature type="binding site" evidence="2">
    <location>
        <position position="112"/>
    </location>
    <ligand>
        <name>DNA</name>
        <dbReference type="ChEBI" id="CHEBI:16991"/>
    </ligand>
</feature>
<feature type="binding site" evidence="2">
    <location>
        <position position="153"/>
    </location>
    <ligand>
        <name>DNA</name>
        <dbReference type="ChEBI" id="CHEBI:16991"/>
    </ligand>
</feature>
<keyword id="KW-0227">DNA damage</keyword>
<keyword id="KW-0234">DNA repair</keyword>
<keyword id="KW-0238">DNA-binding</keyword>
<keyword id="KW-0326">Glycosidase</keyword>
<keyword id="KW-0378">Hydrolase</keyword>
<keyword id="KW-0456">Lyase</keyword>
<keyword id="KW-0479">Metal-binding</keyword>
<keyword id="KW-0511">Multifunctional enzyme</keyword>
<keyword id="KW-0862">Zinc</keyword>
<keyword id="KW-0863">Zinc-finger</keyword>
<gene>
    <name evidence="2" type="primary">mutM</name>
    <name evidence="2" type="synonym">fpg</name>
    <name type="ordered locus">BMASAVP1_A0083</name>
</gene>
<sequence length="272" mass="30296">MPELPEVEVTRRGIEPFVAGRRVERVDVRTAMLRWPVPAGFAEMLRSREVLRVERRGKYLLFEVDAGWFIVHLGMTGTLRVLPNDAPPPAPAKHDHVDWIFDEFVLRFRDPRRFGAVLWHPRDAGDVHAHPLLASLGVEPFSAALLFGRTRGRTVSVKQALLAGDIVVGVGNIYASESLFRAGIRPTTAAGRVSLPRYERLADAVRATLADAIERGGSTLRDFVGSNGESGYFQLDCFVYDRAGEPCRVCGAPIRQIVQGQRSTYFCPNCQR</sequence>
<reference key="1">
    <citation type="journal article" date="2010" name="Genome Biol. Evol.">
        <title>Continuing evolution of Burkholderia mallei through genome reduction and large-scale rearrangements.</title>
        <authorList>
            <person name="Losada L."/>
            <person name="Ronning C.M."/>
            <person name="DeShazer D."/>
            <person name="Woods D."/>
            <person name="Fedorova N."/>
            <person name="Kim H.S."/>
            <person name="Shabalina S.A."/>
            <person name="Pearson T.R."/>
            <person name="Brinkac L."/>
            <person name="Tan P."/>
            <person name="Nandi T."/>
            <person name="Crabtree J."/>
            <person name="Badger J."/>
            <person name="Beckstrom-Sternberg S."/>
            <person name="Saqib M."/>
            <person name="Schutzer S.E."/>
            <person name="Keim P."/>
            <person name="Nierman W.C."/>
        </authorList>
    </citation>
    <scope>NUCLEOTIDE SEQUENCE [LARGE SCALE GENOMIC DNA]</scope>
    <source>
        <strain>SAVP1</strain>
    </source>
</reference>
<comment type="function">
    <text evidence="2">Involved in base excision repair of DNA damaged by oxidation or by mutagenic agents. Acts as a DNA glycosylase that recognizes and removes damaged bases. Has a preference for oxidized purines, such as 7,8-dihydro-8-oxoguanine (8-oxoG). Has AP (apurinic/apyrimidinic) lyase activity and introduces nicks in the DNA strand. Cleaves the DNA backbone by beta-delta elimination to generate a single-strand break at the site of the removed base with both 3'- and 5'-phosphates.</text>
</comment>
<comment type="catalytic activity">
    <reaction evidence="2">
        <text>Hydrolysis of DNA containing ring-opened 7-methylguanine residues, releasing 2,6-diamino-4-hydroxy-5-(N-methyl)formamidopyrimidine.</text>
        <dbReference type="EC" id="3.2.2.23"/>
    </reaction>
</comment>
<comment type="catalytic activity">
    <reaction evidence="2">
        <text>2'-deoxyribonucleotide-(2'-deoxyribose 5'-phosphate)-2'-deoxyribonucleotide-DNA = a 3'-end 2'-deoxyribonucleotide-(2,3-dehydro-2,3-deoxyribose 5'-phosphate)-DNA + a 5'-end 5'-phospho-2'-deoxyribonucleoside-DNA + H(+)</text>
        <dbReference type="Rhea" id="RHEA:66592"/>
        <dbReference type="Rhea" id="RHEA-COMP:13180"/>
        <dbReference type="Rhea" id="RHEA-COMP:16897"/>
        <dbReference type="Rhea" id="RHEA-COMP:17067"/>
        <dbReference type="ChEBI" id="CHEBI:15378"/>
        <dbReference type="ChEBI" id="CHEBI:136412"/>
        <dbReference type="ChEBI" id="CHEBI:157695"/>
        <dbReference type="ChEBI" id="CHEBI:167181"/>
        <dbReference type="EC" id="4.2.99.18"/>
    </reaction>
</comment>
<comment type="cofactor">
    <cofactor evidence="2">
        <name>Zn(2+)</name>
        <dbReference type="ChEBI" id="CHEBI:29105"/>
    </cofactor>
    <text evidence="2">Binds 1 zinc ion per subunit.</text>
</comment>
<comment type="subunit">
    <text evidence="2">Monomer.</text>
</comment>
<comment type="similarity">
    <text evidence="2">Belongs to the FPG family.</text>
</comment>